<accession>Q1MID4</accession>
<proteinExistence type="inferred from homology"/>
<gene>
    <name evidence="1" type="primary">rplP</name>
    <name type="ordered locus">RL1781</name>
</gene>
<sequence>MLQPKRTKYRKQFKGRIKGVAKGGSDLAFGEFGLKAQEPNRVNAREIEAARRAITRYMKRAGRVWIRVFPDVPVTKKPTEVRMGKGKGSVEYWACKVKPGRMMFEIDGVSEEIAREALRLGSAKLSVKTRFVQRIAE</sequence>
<comment type="function">
    <text evidence="1">Binds 23S rRNA and is also seen to make contacts with the A and possibly P site tRNAs.</text>
</comment>
<comment type="subunit">
    <text evidence="1">Part of the 50S ribosomal subunit.</text>
</comment>
<comment type="similarity">
    <text evidence="1">Belongs to the universal ribosomal protein uL16 family.</text>
</comment>
<organism>
    <name type="scientific">Rhizobium johnstonii (strain DSM 114642 / LMG 32736 / 3841)</name>
    <name type="common">Rhizobium leguminosarum bv. viciae</name>
    <dbReference type="NCBI Taxonomy" id="216596"/>
    <lineage>
        <taxon>Bacteria</taxon>
        <taxon>Pseudomonadati</taxon>
        <taxon>Pseudomonadota</taxon>
        <taxon>Alphaproteobacteria</taxon>
        <taxon>Hyphomicrobiales</taxon>
        <taxon>Rhizobiaceae</taxon>
        <taxon>Rhizobium/Agrobacterium group</taxon>
        <taxon>Rhizobium</taxon>
        <taxon>Rhizobium johnstonii</taxon>
    </lineage>
</organism>
<name>RL16_RHIJ3</name>
<keyword id="KW-0687">Ribonucleoprotein</keyword>
<keyword id="KW-0689">Ribosomal protein</keyword>
<keyword id="KW-0694">RNA-binding</keyword>
<keyword id="KW-0699">rRNA-binding</keyword>
<keyword id="KW-0820">tRNA-binding</keyword>
<feature type="chain" id="PRO_0000251659" description="Large ribosomal subunit protein uL16">
    <location>
        <begin position="1"/>
        <end position="137"/>
    </location>
</feature>
<dbReference type="EMBL" id="AM236080">
    <property type="protein sequence ID" value="CAK07276.1"/>
    <property type="molecule type" value="Genomic_DNA"/>
</dbReference>
<dbReference type="RefSeq" id="WP_003547555.1">
    <property type="nucleotide sequence ID" value="NC_008380.1"/>
</dbReference>
<dbReference type="SMR" id="Q1MID4"/>
<dbReference type="EnsemblBacteria" id="CAK07276">
    <property type="protein sequence ID" value="CAK07276"/>
    <property type="gene ID" value="RL1781"/>
</dbReference>
<dbReference type="GeneID" id="84669494"/>
<dbReference type="KEGG" id="rle:RL1781"/>
<dbReference type="eggNOG" id="COG0197">
    <property type="taxonomic scope" value="Bacteria"/>
</dbReference>
<dbReference type="HOGENOM" id="CLU_078858_2_1_5"/>
<dbReference type="Proteomes" id="UP000006575">
    <property type="component" value="Chromosome"/>
</dbReference>
<dbReference type="GO" id="GO:0022625">
    <property type="term" value="C:cytosolic large ribosomal subunit"/>
    <property type="evidence" value="ECO:0007669"/>
    <property type="project" value="TreeGrafter"/>
</dbReference>
<dbReference type="GO" id="GO:0019843">
    <property type="term" value="F:rRNA binding"/>
    <property type="evidence" value="ECO:0007669"/>
    <property type="project" value="UniProtKB-UniRule"/>
</dbReference>
<dbReference type="GO" id="GO:0003735">
    <property type="term" value="F:structural constituent of ribosome"/>
    <property type="evidence" value="ECO:0007669"/>
    <property type="project" value="InterPro"/>
</dbReference>
<dbReference type="GO" id="GO:0000049">
    <property type="term" value="F:tRNA binding"/>
    <property type="evidence" value="ECO:0007669"/>
    <property type="project" value="UniProtKB-KW"/>
</dbReference>
<dbReference type="GO" id="GO:0006412">
    <property type="term" value="P:translation"/>
    <property type="evidence" value="ECO:0007669"/>
    <property type="project" value="UniProtKB-UniRule"/>
</dbReference>
<dbReference type="CDD" id="cd01433">
    <property type="entry name" value="Ribosomal_L16_L10e"/>
    <property type="match status" value="1"/>
</dbReference>
<dbReference type="FunFam" id="3.90.1170.10:FF:000001">
    <property type="entry name" value="50S ribosomal protein L16"/>
    <property type="match status" value="1"/>
</dbReference>
<dbReference type="Gene3D" id="3.90.1170.10">
    <property type="entry name" value="Ribosomal protein L10e/L16"/>
    <property type="match status" value="1"/>
</dbReference>
<dbReference type="HAMAP" id="MF_01342">
    <property type="entry name" value="Ribosomal_uL16"/>
    <property type="match status" value="1"/>
</dbReference>
<dbReference type="InterPro" id="IPR047873">
    <property type="entry name" value="Ribosomal_uL16"/>
</dbReference>
<dbReference type="InterPro" id="IPR000114">
    <property type="entry name" value="Ribosomal_uL16_bact-type"/>
</dbReference>
<dbReference type="InterPro" id="IPR020798">
    <property type="entry name" value="Ribosomal_uL16_CS"/>
</dbReference>
<dbReference type="InterPro" id="IPR016180">
    <property type="entry name" value="Ribosomal_uL16_dom"/>
</dbReference>
<dbReference type="InterPro" id="IPR036920">
    <property type="entry name" value="Ribosomal_uL16_sf"/>
</dbReference>
<dbReference type="NCBIfam" id="TIGR01164">
    <property type="entry name" value="rplP_bact"/>
    <property type="match status" value="1"/>
</dbReference>
<dbReference type="PANTHER" id="PTHR12220">
    <property type="entry name" value="50S/60S RIBOSOMAL PROTEIN L16"/>
    <property type="match status" value="1"/>
</dbReference>
<dbReference type="PANTHER" id="PTHR12220:SF13">
    <property type="entry name" value="LARGE RIBOSOMAL SUBUNIT PROTEIN UL16M"/>
    <property type="match status" value="1"/>
</dbReference>
<dbReference type="Pfam" id="PF00252">
    <property type="entry name" value="Ribosomal_L16"/>
    <property type="match status" value="1"/>
</dbReference>
<dbReference type="PRINTS" id="PR00060">
    <property type="entry name" value="RIBOSOMALL16"/>
</dbReference>
<dbReference type="SUPFAM" id="SSF54686">
    <property type="entry name" value="Ribosomal protein L16p/L10e"/>
    <property type="match status" value="1"/>
</dbReference>
<dbReference type="PROSITE" id="PS00586">
    <property type="entry name" value="RIBOSOMAL_L16_1"/>
    <property type="match status" value="1"/>
</dbReference>
<dbReference type="PROSITE" id="PS00701">
    <property type="entry name" value="RIBOSOMAL_L16_2"/>
    <property type="match status" value="1"/>
</dbReference>
<evidence type="ECO:0000255" key="1">
    <source>
        <dbReference type="HAMAP-Rule" id="MF_01342"/>
    </source>
</evidence>
<evidence type="ECO:0000305" key="2"/>
<reference key="1">
    <citation type="journal article" date="2006" name="Genome Biol.">
        <title>The genome of Rhizobium leguminosarum has recognizable core and accessory components.</title>
        <authorList>
            <person name="Young J.P.W."/>
            <person name="Crossman L.C."/>
            <person name="Johnston A.W.B."/>
            <person name="Thomson N.R."/>
            <person name="Ghazoui Z.F."/>
            <person name="Hull K.H."/>
            <person name="Wexler M."/>
            <person name="Curson A.R.J."/>
            <person name="Todd J.D."/>
            <person name="Poole P.S."/>
            <person name="Mauchline T.H."/>
            <person name="East A.K."/>
            <person name="Quail M.A."/>
            <person name="Churcher C."/>
            <person name="Arrowsmith C."/>
            <person name="Cherevach I."/>
            <person name="Chillingworth T."/>
            <person name="Clarke K."/>
            <person name="Cronin A."/>
            <person name="Davis P."/>
            <person name="Fraser A."/>
            <person name="Hance Z."/>
            <person name="Hauser H."/>
            <person name="Jagels K."/>
            <person name="Moule S."/>
            <person name="Mungall K."/>
            <person name="Norbertczak H."/>
            <person name="Rabbinowitsch E."/>
            <person name="Sanders M."/>
            <person name="Simmonds M."/>
            <person name="Whitehead S."/>
            <person name="Parkhill J."/>
        </authorList>
    </citation>
    <scope>NUCLEOTIDE SEQUENCE [LARGE SCALE GENOMIC DNA]</scope>
    <source>
        <strain>DSM 114642 / LMG 32736 / 3841</strain>
    </source>
</reference>
<protein>
    <recommendedName>
        <fullName evidence="1">Large ribosomal subunit protein uL16</fullName>
    </recommendedName>
    <alternativeName>
        <fullName evidence="2">50S ribosomal protein L16</fullName>
    </alternativeName>
</protein>